<organism>
    <name type="scientific">Mycobacterium tuberculosis (strain CDC 1551 / Oshkosh)</name>
    <dbReference type="NCBI Taxonomy" id="83331"/>
    <lineage>
        <taxon>Bacteria</taxon>
        <taxon>Bacillati</taxon>
        <taxon>Actinomycetota</taxon>
        <taxon>Actinomycetes</taxon>
        <taxon>Mycobacteriales</taxon>
        <taxon>Mycobacteriaceae</taxon>
        <taxon>Mycobacterium</taxon>
        <taxon>Mycobacterium tuberculosis complex</taxon>
    </lineage>
</organism>
<feature type="chain" id="PRO_0000428448" description="Trehalose transport system permease protein SugB">
    <location>
        <begin position="1"/>
        <end position="274"/>
    </location>
</feature>
<feature type="transmembrane region" description="Helical" evidence="2">
    <location>
        <begin position="8"/>
        <end position="28"/>
    </location>
</feature>
<feature type="transmembrane region" description="Helical" evidence="2">
    <location>
        <begin position="70"/>
        <end position="90"/>
    </location>
</feature>
<feature type="transmembrane region" description="Helical" evidence="2">
    <location>
        <begin position="102"/>
        <end position="122"/>
    </location>
</feature>
<feature type="transmembrane region" description="Helical" evidence="2">
    <location>
        <begin position="137"/>
        <end position="157"/>
    </location>
</feature>
<feature type="transmembrane region" description="Helical" evidence="2">
    <location>
        <begin position="182"/>
        <end position="202"/>
    </location>
</feature>
<feature type="transmembrane region" description="Helical" evidence="2">
    <location>
        <begin position="239"/>
        <end position="259"/>
    </location>
</feature>
<feature type="domain" description="ABC transmembrane type-1" evidence="2">
    <location>
        <begin position="66"/>
        <end position="259"/>
    </location>
</feature>
<accession>P9WG00</accession>
<accession>F2GFS5</accession>
<accession>L0T918</accession>
<accession>O50453</accession>
<accession>Q7D8J7</accession>
<dbReference type="EMBL" id="AE000516">
    <property type="protein sequence ID" value="AAK45533.1"/>
    <property type="molecule type" value="Genomic_DNA"/>
</dbReference>
<dbReference type="PIR" id="D70952">
    <property type="entry name" value="D70952"/>
</dbReference>
<dbReference type="RefSeq" id="WP_003900298.1">
    <property type="nucleotide sequence ID" value="NZ_KK341227.1"/>
</dbReference>
<dbReference type="SMR" id="P9WG00"/>
<dbReference type="GeneID" id="45425207"/>
<dbReference type="KEGG" id="mtc:MT1275"/>
<dbReference type="PATRIC" id="fig|83331.31.peg.1378"/>
<dbReference type="HOGENOM" id="CLU_016047_1_2_11"/>
<dbReference type="Proteomes" id="UP000001020">
    <property type="component" value="Chromosome"/>
</dbReference>
<dbReference type="GO" id="GO:0005886">
    <property type="term" value="C:plasma membrane"/>
    <property type="evidence" value="ECO:0007669"/>
    <property type="project" value="UniProtKB-SubCell"/>
</dbReference>
<dbReference type="GO" id="GO:0055085">
    <property type="term" value="P:transmembrane transport"/>
    <property type="evidence" value="ECO:0007669"/>
    <property type="project" value="InterPro"/>
</dbReference>
<dbReference type="CDD" id="cd06261">
    <property type="entry name" value="TM_PBP2"/>
    <property type="match status" value="1"/>
</dbReference>
<dbReference type="FunFam" id="1.10.3720.10:FF:000115">
    <property type="entry name" value="Sugar-transport integral membrane protein ABC transporter sugB"/>
    <property type="match status" value="1"/>
</dbReference>
<dbReference type="Gene3D" id="1.10.3720.10">
    <property type="entry name" value="MetI-like"/>
    <property type="match status" value="1"/>
</dbReference>
<dbReference type="InterPro" id="IPR050901">
    <property type="entry name" value="BP-dep_ABC_trans_perm"/>
</dbReference>
<dbReference type="InterPro" id="IPR000515">
    <property type="entry name" value="MetI-like"/>
</dbReference>
<dbReference type="InterPro" id="IPR035906">
    <property type="entry name" value="MetI-like_sf"/>
</dbReference>
<dbReference type="PANTHER" id="PTHR32243:SF18">
    <property type="entry name" value="INNER MEMBRANE ABC TRANSPORTER PERMEASE PROTEIN YCJP"/>
    <property type="match status" value="1"/>
</dbReference>
<dbReference type="PANTHER" id="PTHR32243">
    <property type="entry name" value="MALTOSE TRANSPORT SYSTEM PERMEASE-RELATED"/>
    <property type="match status" value="1"/>
</dbReference>
<dbReference type="Pfam" id="PF00528">
    <property type="entry name" value="BPD_transp_1"/>
    <property type="match status" value="1"/>
</dbReference>
<dbReference type="SUPFAM" id="SSF161098">
    <property type="entry name" value="MetI-like"/>
    <property type="match status" value="1"/>
</dbReference>
<dbReference type="PROSITE" id="PS50928">
    <property type="entry name" value="ABC_TM1"/>
    <property type="match status" value="1"/>
</dbReference>
<proteinExistence type="inferred from homology"/>
<protein>
    <recommendedName>
        <fullName>Trehalose transport system permease protein SugB</fullName>
    </recommendedName>
</protein>
<evidence type="ECO:0000250" key="1"/>
<evidence type="ECO:0000255" key="2">
    <source>
        <dbReference type="PROSITE-ProRule" id="PRU00441"/>
    </source>
</evidence>
<evidence type="ECO:0000305" key="3"/>
<sequence>MGARRATYWAVLDTLVVGYALLPVLWIFSLSLKPTSTVKDGKLIPSTVTFDNYRGIFRGDLFSSALINSIGIGLITTVIAVVLGAMAAYAVARLEFPGKRLLIGAALLITMFPSISLVTPLFNIERAIGLFDTWPGLILPYITFALPLAIYTLSAFFREIPWDLEKAAKMDGATPGQAFRKVIVPLAAPGLVTAAILVFIFAWNDLLLALSLTATKAAITAPVAIANFTGSSQFEEPTGSIAAGAIVITIPIIVFVLIFQRRIVAGLTSGAVKG</sequence>
<reference key="1">
    <citation type="journal article" date="2002" name="J. Bacteriol.">
        <title>Whole-genome comparison of Mycobacterium tuberculosis clinical and laboratory strains.</title>
        <authorList>
            <person name="Fleischmann R.D."/>
            <person name="Alland D."/>
            <person name="Eisen J.A."/>
            <person name="Carpenter L."/>
            <person name="White O."/>
            <person name="Peterson J.D."/>
            <person name="DeBoy R.T."/>
            <person name="Dodson R.J."/>
            <person name="Gwinn M.L."/>
            <person name="Haft D.H."/>
            <person name="Hickey E.K."/>
            <person name="Kolonay J.F."/>
            <person name="Nelson W.C."/>
            <person name="Umayam L.A."/>
            <person name="Ermolaeva M.D."/>
            <person name="Salzberg S.L."/>
            <person name="Delcher A."/>
            <person name="Utterback T.R."/>
            <person name="Weidman J.F."/>
            <person name="Khouri H.M."/>
            <person name="Gill J."/>
            <person name="Mikula A."/>
            <person name="Bishai W."/>
            <person name="Jacobs W.R. Jr."/>
            <person name="Venter J.C."/>
            <person name="Fraser C.M."/>
        </authorList>
    </citation>
    <scope>NUCLEOTIDE SEQUENCE [LARGE SCALE GENOMIC DNA]</scope>
    <source>
        <strain>CDC 1551 / Oshkosh</strain>
    </source>
</reference>
<comment type="function">
    <text evidence="1">Part of the ABC transporter complex LpqY-SugA-SugB-SugC, which is highly specific for uptake of trehalose. Involved in the recycling of extracellular trehalose released from trehalose-containing molecules synthesized by M.tuberculosis. Trehalose uptake is essential for virulence. Probably responsible for the translocation of the substrate across the membrane (By similarity).</text>
</comment>
<comment type="subunit">
    <text evidence="1">The complex is composed of two ATP-binding proteins (SugC), two transmembrane proteins (Suga and SugB) and a solute-binding protein (LpqY).</text>
</comment>
<comment type="subcellular location">
    <subcellularLocation>
        <location evidence="3">Cell inner membrane</location>
        <topology evidence="2">Multi-pass membrane protein</topology>
    </subcellularLocation>
</comment>
<comment type="similarity">
    <text evidence="3">Belongs to the binding-protein-dependent transport system permease family.</text>
</comment>
<gene>
    <name type="primary">sugB</name>
    <name type="ordered locus">MT1275</name>
</gene>
<name>SUGB_MYCTO</name>
<keyword id="KW-0997">Cell inner membrane</keyword>
<keyword id="KW-1003">Cell membrane</keyword>
<keyword id="KW-0472">Membrane</keyword>
<keyword id="KW-1185">Reference proteome</keyword>
<keyword id="KW-0762">Sugar transport</keyword>
<keyword id="KW-0812">Transmembrane</keyword>
<keyword id="KW-1133">Transmembrane helix</keyword>
<keyword id="KW-0813">Transport</keyword>